<proteinExistence type="predicted"/>
<accession>P54590</accession>
<evidence type="ECO:0000255" key="1">
    <source>
        <dbReference type="PROSITE-ProRule" id="PRU00307"/>
    </source>
</evidence>
<sequence length="121" mass="13953">MDNQFQSSKPIYLQIADQIFYRLVRKELLPGDKLPSVREMAIQTKVNPNTIQRTYSEMERLGIVETRRGQGTFIAEKAEIVDELKDKLTREVLEGFVKQMKELGLTKEEMLEGIKTFTEGG</sequence>
<keyword id="KW-0238">DNA-binding</keyword>
<keyword id="KW-1185">Reference proteome</keyword>
<keyword id="KW-0804">Transcription</keyword>
<keyword id="KW-0805">Transcription regulation</keyword>
<protein>
    <recommendedName>
        <fullName>Uncharacterized HTH-type transcriptional regulator YhcF</fullName>
    </recommendedName>
</protein>
<dbReference type="EMBL" id="X96983">
    <property type="protein sequence ID" value="CAA65689.1"/>
    <property type="molecule type" value="Genomic_DNA"/>
</dbReference>
<dbReference type="EMBL" id="AL009126">
    <property type="protein sequence ID" value="CAB12734.1"/>
    <property type="molecule type" value="Genomic_DNA"/>
</dbReference>
<dbReference type="PIR" id="B69822">
    <property type="entry name" value="B69822"/>
</dbReference>
<dbReference type="RefSeq" id="NP_388787.1">
    <property type="nucleotide sequence ID" value="NC_000964.3"/>
</dbReference>
<dbReference type="RefSeq" id="WP_003233424.1">
    <property type="nucleotide sequence ID" value="NZ_OZ025638.1"/>
</dbReference>
<dbReference type="SMR" id="P54590"/>
<dbReference type="FunCoup" id="P54590">
    <property type="interactions" value="252"/>
</dbReference>
<dbReference type="STRING" id="224308.BSU09060"/>
<dbReference type="PaxDb" id="224308-BSU09060"/>
<dbReference type="EnsemblBacteria" id="CAB12734">
    <property type="protein sequence ID" value="CAB12734"/>
    <property type="gene ID" value="BSU_09060"/>
</dbReference>
<dbReference type="GeneID" id="936231"/>
<dbReference type="KEGG" id="bsu:BSU09060"/>
<dbReference type="PATRIC" id="fig|224308.179.peg.979"/>
<dbReference type="eggNOG" id="COG1725">
    <property type="taxonomic scope" value="Bacteria"/>
</dbReference>
<dbReference type="InParanoid" id="P54590"/>
<dbReference type="OrthoDB" id="362473at2"/>
<dbReference type="PhylomeDB" id="P54590"/>
<dbReference type="BioCyc" id="BSUB:BSU09060-MONOMER"/>
<dbReference type="Proteomes" id="UP000001570">
    <property type="component" value="Chromosome"/>
</dbReference>
<dbReference type="GO" id="GO:0003677">
    <property type="term" value="F:DNA binding"/>
    <property type="evidence" value="ECO:0007669"/>
    <property type="project" value="UniProtKB-KW"/>
</dbReference>
<dbReference type="GO" id="GO:0003700">
    <property type="term" value="F:DNA-binding transcription factor activity"/>
    <property type="evidence" value="ECO:0007669"/>
    <property type="project" value="InterPro"/>
</dbReference>
<dbReference type="CDD" id="cd07377">
    <property type="entry name" value="WHTH_GntR"/>
    <property type="match status" value="1"/>
</dbReference>
<dbReference type="Gene3D" id="1.10.10.10">
    <property type="entry name" value="Winged helix-like DNA-binding domain superfamily/Winged helix DNA-binding domain"/>
    <property type="match status" value="1"/>
</dbReference>
<dbReference type="InterPro" id="IPR000524">
    <property type="entry name" value="Tscrpt_reg_HTH_GntR"/>
</dbReference>
<dbReference type="InterPro" id="IPR036388">
    <property type="entry name" value="WH-like_DNA-bd_sf"/>
</dbReference>
<dbReference type="InterPro" id="IPR036390">
    <property type="entry name" value="WH_DNA-bd_sf"/>
</dbReference>
<dbReference type="PANTHER" id="PTHR38445:SF6">
    <property type="entry name" value="GNTR-FAMILY TRANSCRIPTIONAL REGULATOR"/>
    <property type="match status" value="1"/>
</dbReference>
<dbReference type="PANTHER" id="PTHR38445">
    <property type="entry name" value="HTH-TYPE TRANSCRIPTIONAL REPRESSOR YTRA"/>
    <property type="match status" value="1"/>
</dbReference>
<dbReference type="Pfam" id="PF00392">
    <property type="entry name" value="GntR"/>
    <property type="match status" value="1"/>
</dbReference>
<dbReference type="SMART" id="SM00345">
    <property type="entry name" value="HTH_GNTR"/>
    <property type="match status" value="1"/>
</dbReference>
<dbReference type="SUPFAM" id="SSF46785">
    <property type="entry name" value="Winged helix' DNA-binding domain"/>
    <property type="match status" value="1"/>
</dbReference>
<dbReference type="PROSITE" id="PS50949">
    <property type="entry name" value="HTH_GNTR"/>
    <property type="match status" value="1"/>
</dbReference>
<feature type="chain" id="PRO_0000050689" description="Uncharacterized HTH-type transcriptional regulator YhcF">
    <location>
        <begin position="1"/>
        <end position="121"/>
    </location>
</feature>
<feature type="domain" description="HTH gntR-type" evidence="1">
    <location>
        <begin position="9"/>
        <end position="77"/>
    </location>
</feature>
<feature type="DNA-binding region" description="H-T-H motif" evidence="1">
    <location>
        <begin position="37"/>
        <end position="56"/>
    </location>
</feature>
<reference key="1">
    <citation type="journal article" date="1996" name="Microbiology">
        <title>A 22 kb DNA sequence in the cspB-glpPFKD region at 75 degrees on the Bacillus subtilis chromosome.</title>
        <authorList>
            <person name="Noback M.A."/>
            <person name="Terpstra P."/>
            <person name="Holsappel S."/>
            <person name="Venema G."/>
            <person name="Bron S."/>
        </authorList>
    </citation>
    <scope>NUCLEOTIDE SEQUENCE [GENOMIC DNA]</scope>
    <source>
        <strain>168</strain>
    </source>
</reference>
<reference key="2">
    <citation type="journal article" date="1997" name="Nature">
        <title>The complete genome sequence of the Gram-positive bacterium Bacillus subtilis.</title>
        <authorList>
            <person name="Kunst F."/>
            <person name="Ogasawara N."/>
            <person name="Moszer I."/>
            <person name="Albertini A.M."/>
            <person name="Alloni G."/>
            <person name="Azevedo V."/>
            <person name="Bertero M.G."/>
            <person name="Bessieres P."/>
            <person name="Bolotin A."/>
            <person name="Borchert S."/>
            <person name="Borriss R."/>
            <person name="Boursier L."/>
            <person name="Brans A."/>
            <person name="Braun M."/>
            <person name="Brignell S.C."/>
            <person name="Bron S."/>
            <person name="Brouillet S."/>
            <person name="Bruschi C.V."/>
            <person name="Caldwell B."/>
            <person name="Capuano V."/>
            <person name="Carter N.M."/>
            <person name="Choi S.-K."/>
            <person name="Codani J.-J."/>
            <person name="Connerton I.F."/>
            <person name="Cummings N.J."/>
            <person name="Daniel R.A."/>
            <person name="Denizot F."/>
            <person name="Devine K.M."/>
            <person name="Duesterhoeft A."/>
            <person name="Ehrlich S.D."/>
            <person name="Emmerson P.T."/>
            <person name="Entian K.-D."/>
            <person name="Errington J."/>
            <person name="Fabret C."/>
            <person name="Ferrari E."/>
            <person name="Foulger D."/>
            <person name="Fritz C."/>
            <person name="Fujita M."/>
            <person name="Fujita Y."/>
            <person name="Fuma S."/>
            <person name="Galizzi A."/>
            <person name="Galleron N."/>
            <person name="Ghim S.-Y."/>
            <person name="Glaser P."/>
            <person name="Goffeau A."/>
            <person name="Golightly E.J."/>
            <person name="Grandi G."/>
            <person name="Guiseppi G."/>
            <person name="Guy B.J."/>
            <person name="Haga K."/>
            <person name="Haiech J."/>
            <person name="Harwood C.R."/>
            <person name="Henaut A."/>
            <person name="Hilbert H."/>
            <person name="Holsappel S."/>
            <person name="Hosono S."/>
            <person name="Hullo M.-F."/>
            <person name="Itaya M."/>
            <person name="Jones L.-M."/>
            <person name="Joris B."/>
            <person name="Karamata D."/>
            <person name="Kasahara Y."/>
            <person name="Klaerr-Blanchard M."/>
            <person name="Klein C."/>
            <person name="Kobayashi Y."/>
            <person name="Koetter P."/>
            <person name="Koningstein G."/>
            <person name="Krogh S."/>
            <person name="Kumano M."/>
            <person name="Kurita K."/>
            <person name="Lapidus A."/>
            <person name="Lardinois S."/>
            <person name="Lauber J."/>
            <person name="Lazarevic V."/>
            <person name="Lee S.-M."/>
            <person name="Levine A."/>
            <person name="Liu H."/>
            <person name="Masuda S."/>
            <person name="Mauel C."/>
            <person name="Medigue C."/>
            <person name="Medina N."/>
            <person name="Mellado R.P."/>
            <person name="Mizuno M."/>
            <person name="Moestl D."/>
            <person name="Nakai S."/>
            <person name="Noback M."/>
            <person name="Noone D."/>
            <person name="O'Reilly M."/>
            <person name="Ogawa K."/>
            <person name="Ogiwara A."/>
            <person name="Oudega B."/>
            <person name="Park S.-H."/>
            <person name="Parro V."/>
            <person name="Pohl T.M."/>
            <person name="Portetelle D."/>
            <person name="Porwollik S."/>
            <person name="Prescott A.M."/>
            <person name="Presecan E."/>
            <person name="Pujic P."/>
            <person name="Purnelle B."/>
            <person name="Rapoport G."/>
            <person name="Rey M."/>
            <person name="Reynolds S."/>
            <person name="Rieger M."/>
            <person name="Rivolta C."/>
            <person name="Rocha E."/>
            <person name="Roche B."/>
            <person name="Rose M."/>
            <person name="Sadaie Y."/>
            <person name="Sato T."/>
            <person name="Scanlan E."/>
            <person name="Schleich S."/>
            <person name="Schroeter R."/>
            <person name="Scoffone F."/>
            <person name="Sekiguchi J."/>
            <person name="Sekowska A."/>
            <person name="Seror S.J."/>
            <person name="Serror P."/>
            <person name="Shin B.-S."/>
            <person name="Soldo B."/>
            <person name="Sorokin A."/>
            <person name="Tacconi E."/>
            <person name="Takagi T."/>
            <person name="Takahashi H."/>
            <person name="Takemaru K."/>
            <person name="Takeuchi M."/>
            <person name="Tamakoshi A."/>
            <person name="Tanaka T."/>
            <person name="Terpstra P."/>
            <person name="Tognoni A."/>
            <person name="Tosato V."/>
            <person name="Uchiyama S."/>
            <person name="Vandenbol M."/>
            <person name="Vannier F."/>
            <person name="Vassarotti A."/>
            <person name="Viari A."/>
            <person name="Wambutt R."/>
            <person name="Wedler E."/>
            <person name="Wedler H."/>
            <person name="Weitzenegger T."/>
            <person name="Winters P."/>
            <person name="Wipat A."/>
            <person name="Yamamoto H."/>
            <person name="Yamane K."/>
            <person name="Yasumoto K."/>
            <person name="Yata K."/>
            <person name="Yoshida K."/>
            <person name="Yoshikawa H.-F."/>
            <person name="Zumstein E."/>
            <person name="Yoshikawa H."/>
            <person name="Danchin A."/>
        </authorList>
    </citation>
    <scope>NUCLEOTIDE SEQUENCE [LARGE SCALE GENOMIC DNA]</scope>
    <source>
        <strain>168</strain>
    </source>
</reference>
<name>YHCF_BACSU</name>
<organism>
    <name type="scientific">Bacillus subtilis (strain 168)</name>
    <dbReference type="NCBI Taxonomy" id="224308"/>
    <lineage>
        <taxon>Bacteria</taxon>
        <taxon>Bacillati</taxon>
        <taxon>Bacillota</taxon>
        <taxon>Bacilli</taxon>
        <taxon>Bacillales</taxon>
        <taxon>Bacillaceae</taxon>
        <taxon>Bacillus</taxon>
    </lineage>
</organism>
<gene>
    <name type="primary">yhcF</name>
    <name type="ordered locus">BSU09060</name>
</gene>